<organism>
    <name type="scientific">Mus musculus</name>
    <name type="common">Mouse</name>
    <dbReference type="NCBI Taxonomy" id="10090"/>
    <lineage>
        <taxon>Eukaryota</taxon>
        <taxon>Metazoa</taxon>
        <taxon>Chordata</taxon>
        <taxon>Craniata</taxon>
        <taxon>Vertebrata</taxon>
        <taxon>Euteleostomi</taxon>
        <taxon>Mammalia</taxon>
        <taxon>Eutheria</taxon>
        <taxon>Euarchontoglires</taxon>
        <taxon>Glires</taxon>
        <taxon>Rodentia</taxon>
        <taxon>Myomorpha</taxon>
        <taxon>Muroidea</taxon>
        <taxon>Muridae</taxon>
        <taxon>Murinae</taxon>
        <taxon>Mus</taxon>
        <taxon>Mus</taxon>
    </lineage>
</organism>
<name>CRYAB_MOUSE</name>
<evidence type="ECO:0000250" key="1"/>
<evidence type="ECO:0000250" key="2">
    <source>
        <dbReference type="UniProtKB" id="P02510"/>
    </source>
</evidence>
<evidence type="ECO:0000250" key="3">
    <source>
        <dbReference type="UniProtKB" id="P02511"/>
    </source>
</evidence>
<evidence type="ECO:0000255" key="4">
    <source>
        <dbReference type="PROSITE-ProRule" id="PRU00285"/>
    </source>
</evidence>
<evidence type="ECO:0000256" key="5">
    <source>
        <dbReference type="SAM" id="MobiDB-lite"/>
    </source>
</evidence>
<evidence type="ECO:0000269" key="6">
    <source>
    </source>
</evidence>
<evidence type="ECO:0000269" key="7">
    <source>
    </source>
</evidence>
<evidence type="ECO:0000269" key="8">
    <source>
    </source>
</evidence>
<evidence type="ECO:0000269" key="9">
    <source>
    </source>
</evidence>
<evidence type="ECO:0000305" key="10"/>
<evidence type="ECO:0000305" key="11">
    <source>
    </source>
</evidence>
<evidence type="ECO:0000312" key="12">
    <source>
        <dbReference type="MGI" id="MGI:88516"/>
    </source>
</evidence>
<evidence type="ECO:0007744" key="13">
    <source>
    </source>
</evidence>
<reference key="1">
    <citation type="journal article" date="1991" name="Mol. Cell. Biol.">
        <title>Alpha B crystallin accumulation is a specific response to Ha-ras and v-mos oncogene expression in mouse NIH 3T3 fibroblasts.</title>
        <authorList>
            <person name="Klemenz R."/>
            <person name="Froehli E."/>
            <person name="Aoyama A."/>
            <person name="Hoffmann S."/>
            <person name="Simpson R.J."/>
            <person name="Moritz R.L."/>
            <person name="Schaeffer R."/>
        </authorList>
    </citation>
    <scope>NUCLEOTIDE SEQUENCE [MRNA]</scope>
    <scope>PROTEIN SEQUENCE OF 1-10 AND 68-81</scope>
</reference>
<reference key="2">
    <citation type="journal article" date="1994" name="Nucleic Acids Res.">
        <title>Structure and alternate tissue-preferred transcription initiation of the mouse alpha B-crystallin/small heat shock protein gene.</title>
        <authorList>
            <person name="Frederikse P.H."/>
            <person name="Dubin R.A."/>
            <person name="Haynes J.I."/>
            <person name="Piatigorsky J."/>
        </authorList>
    </citation>
    <scope>NUCLEOTIDE SEQUENCE [GENOMIC DNA]</scope>
    <source>
        <strain>BALB/cJ</strain>
        <tissue>Lung</tissue>
    </source>
</reference>
<reference key="3">
    <citation type="journal article" date="2004" name="Genome Res.">
        <title>The status, quality, and expansion of the NIH full-length cDNA project: the Mammalian Gene Collection (MGC).</title>
        <authorList>
            <consortium name="The MGC Project Team"/>
        </authorList>
    </citation>
    <scope>NUCLEOTIDE SEQUENCE [LARGE SCALE MRNA]</scope>
    <source>
        <strain>FVB/N</strain>
        <tissue>Kidney</tissue>
    </source>
</reference>
<reference key="4">
    <citation type="journal article" date="1989" name="Mol. Cell. Biol.">
        <title>Expression of the murine alpha B-crystallin gene is not restricted to the lens.</title>
        <authorList>
            <person name="Dubin R.A."/>
            <person name="Wawrousek E.F."/>
            <person name="Piatigorsky J."/>
        </authorList>
    </citation>
    <scope>NUCLEOTIDE SEQUENCE [GENOMIC DNA] OF 1-10</scope>
    <scope>TISSUE SPECIFICITY</scope>
</reference>
<reference key="5">
    <citation type="submission" date="2007-03" db="UniProtKB">
        <authorList>
            <person name="Lubec G."/>
            <person name="Klug S."/>
        </authorList>
    </citation>
    <scope>PROTEIN SEQUENCE OF 12-22 AND 124-149</scope>
    <scope>IDENTIFICATION BY MASS SPECTROMETRY</scope>
    <source>
        <tissue>Hippocampus</tissue>
    </source>
</reference>
<reference key="6">
    <citation type="journal article" date="2000" name="J. Biol. Chem.">
        <title>Identification and characterization of a novel protein from Sertoli cells, PASS1, that associates with mammalian small stress protein hsp27.</title>
        <authorList>
            <person name="Liu C."/>
            <person name="Gilmont R.R."/>
            <person name="Benndorf R."/>
            <person name="Welsh M.J."/>
        </authorList>
    </citation>
    <scope>INTERACTION WITH HSPBAP1</scope>
</reference>
<reference key="7">
    <citation type="journal article" date="2010" name="Cell">
        <title>A tissue-specific atlas of mouse protein phosphorylation and expression.</title>
        <authorList>
            <person name="Huttlin E.L."/>
            <person name="Jedrychowski M.P."/>
            <person name="Elias J.E."/>
            <person name="Goswami T."/>
            <person name="Rad R."/>
            <person name="Beausoleil S.A."/>
            <person name="Villen J."/>
            <person name="Haas W."/>
            <person name="Sowa M.E."/>
            <person name="Gygi S.P."/>
        </authorList>
    </citation>
    <scope>PHOSPHORYLATION [LARGE SCALE ANALYSIS] AT SER-19 AND SER-59</scope>
    <scope>IDENTIFICATION BY MASS SPECTROMETRY [LARGE SCALE ANALYSIS]</scope>
    <source>
        <tissue>Brain</tissue>
        <tissue>Brown adipose tissue</tissue>
        <tissue>Heart</tissue>
        <tissue>Kidney</tissue>
        <tissue>Lung</tissue>
    </source>
</reference>
<reference key="8">
    <citation type="journal article" date="2010" name="J. Cell. Mol. Med.">
        <title>Cross-talk between calcineurin/NFAT and Jak/STAT signalling induces cardioprotective alphaB-crystallin gene expression in response to hypertrophic stimuli.</title>
        <authorList>
            <person name="Manukyan I."/>
            <person name="Galatioto J."/>
            <person name="Mascareno E."/>
            <person name="Bhaduri S."/>
            <person name="Siddiqui M.A."/>
        </authorList>
    </citation>
    <scope>TISSUE SPECIFICITY</scope>
    <scope>INDUCTION BY CALCINEURIN AND TRANSVERSE AORTIC CONSTRICTION</scope>
</reference>
<reference key="9">
    <citation type="journal article" date="2020" name="Biochim. Biophys. Acta">
        <title>Heat shock factor 4 regulates lysosome activity by modulating the alphaB-crystallin-ATP6V1A-mTOR complex in ocular lens.</title>
        <authorList>
            <person name="Cui X."/>
            <person name="Feng R."/>
            <person name="Wang J."/>
            <person name="Du C."/>
            <person name="Pi X."/>
            <person name="Chen D."/>
            <person name="Li J."/>
            <person name="Li H."/>
            <person name="Zhang J."/>
            <person name="Zhang J."/>
            <person name="Mu H."/>
            <person name="Zhang F."/>
            <person name="Liu M."/>
            <person name="Hu Y."/>
        </authorList>
    </citation>
    <scope>INTERACTION WITH ATP6V1A AND MTOR</scope>
    <scope>SUBCELLULAR LOCATION</scope>
    <scope>INDUCTION BY HSF4</scope>
</reference>
<comment type="function">
    <text evidence="9">May contribute to the transparency and refractive index of the lens. Has chaperone-like activity, preventing aggregation of various proteins under a wide range of stress conditions. In lens epithelial cells, stabilizes the ATP6V1A protein, preventing its degradation by the proteasome (PubMed:31786107).</text>
</comment>
<comment type="subunit">
    <text evidence="3 6 9">Heteromer composed of three CRYAA and one CRYAB subunits. Aggregates with homologous proteins, including the small heat shock protein HSPB1, to form large heteromeric complexes. Inter-subunit bridging via zinc ions enhances stability, which is crucial as there is no protein turn over in the lens (By similarity). Interacts with HSPBAP1 (PubMed:10751411). Interacts with TTN/titin. Interacts with TMEM109; in the cellular response to DNA damage. Interacts with DES; binds rapidly during early stages of DES filament assembly and a reduced binding seen in the later stages. Interacts with TMED10; the interaction mediates the translocation from the cytoplasm into the ERGIC (endoplasmic reticulum-Golgi intermediate compartment) and thereby secretion (By similarity). Interacts with ATP6V1A and with MTOR, forming a ternary complex (PubMed:31786107).</text>
</comment>
<comment type="interaction">
    <interactant intactId="EBI-299046">
        <id>P23927</id>
    </interactant>
    <interactant intactId="EBI-602878">
        <id>P42227</id>
        <label>Stat3</label>
    </interactant>
    <organismsDiffer>false</organismsDiffer>
    <experiments>3</experiments>
</comment>
<comment type="interaction">
    <interactant intactId="EBI-299046">
        <id>P23927</id>
    </interactant>
    <interactant intactId="EBI-7673124">
        <id>P07320</id>
        <label>CRYGD</label>
    </interactant>
    <organismsDiffer>true</organismsDiffer>
    <experiments>2</experiments>
</comment>
<comment type="subcellular location">
    <subcellularLocation>
        <location evidence="3">Cytoplasm</location>
        <location evidence="3">Cytosol</location>
    </subcellularLocation>
    <subcellularLocation>
        <location evidence="3">Nucleus</location>
    </subcellularLocation>
    <subcellularLocation>
        <location evidence="3">Secreted</location>
    </subcellularLocation>
    <subcellularLocation>
        <location evidence="11">Lysosome</location>
    </subcellularLocation>
    <text evidence="3">Translocates to the nucleus during heat shock and resides in sub-nuclear structures known as SC35 speckles or nuclear splicing speckles. Localizes at the Z-bands and the intercalated disk in cardiomyocytes. Can be secreted; the secretion is dependent on protein unfolding and facilitated by the cargo receptor TMED10; it results in protein translocation from the cytoplasm into the ERGIC (endoplasmic reticulum-Golgi intermediate compartment) followed by vesicle entry and secretion.</text>
</comment>
<comment type="tissue specificity">
    <text evidence="7 8">Abundantly expressed in the lens of the eye (PubMed:2725488). Expressed in ventricular cardiomyocytes of the heart (PubMed:19538478, PubMed:2725488). Also expressed in skeletal muscle and the kidney (PubMed:2725488).</text>
</comment>
<comment type="induction">
    <text evidence="7 9">Induced by HSF4 (PubMed:31786107). Induced by calcineurin and transverse aortic constriction in ventricular tissue (PubMed:19538478).</text>
</comment>
<comment type="similarity">
    <text evidence="4">Belongs to the small heat shock protein (HSP20) family.</text>
</comment>
<proteinExistence type="evidence at protein level"/>
<feature type="chain" id="PRO_0000125910" description="Alpha-crystallin B chain">
    <location>
        <begin position="1"/>
        <end position="175"/>
    </location>
</feature>
<feature type="domain" description="sHSP" evidence="4">
    <location>
        <begin position="56"/>
        <end position="164"/>
    </location>
</feature>
<feature type="region of interest" description="Disordered" evidence="5">
    <location>
        <begin position="145"/>
        <end position="175"/>
    </location>
</feature>
<feature type="binding site" evidence="1">
    <location>
        <position position="83"/>
    </location>
    <ligand>
        <name>Zn(2+)</name>
        <dbReference type="ChEBI" id="CHEBI:29105"/>
        <label>1</label>
    </ligand>
</feature>
<feature type="binding site" evidence="1">
    <location>
        <position position="104"/>
    </location>
    <ligand>
        <name>Zn(2+)</name>
        <dbReference type="ChEBI" id="CHEBI:29105"/>
        <label>2</label>
    </ligand>
</feature>
<feature type="binding site" evidence="1">
    <location>
        <position position="106"/>
    </location>
    <ligand>
        <name>Zn(2+)</name>
        <dbReference type="ChEBI" id="CHEBI:29105"/>
        <label>2</label>
    </ligand>
</feature>
<feature type="binding site" evidence="1">
    <location>
        <position position="111"/>
    </location>
    <ligand>
        <name>Zn(2+)</name>
        <dbReference type="ChEBI" id="CHEBI:29105"/>
        <label>1</label>
    </ligand>
</feature>
<feature type="binding site" evidence="1">
    <location>
        <position position="119"/>
    </location>
    <ligand>
        <name>Zn(2+)</name>
        <dbReference type="ChEBI" id="CHEBI:29105"/>
        <label>1</label>
    </ligand>
</feature>
<feature type="modified residue" description="N-acetylmethionine" evidence="2 10">
    <location>
        <position position="1"/>
    </location>
</feature>
<feature type="modified residue" description="Phosphoserine" evidence="13">
    <location>
        <position position="19"/>
    </location>
</feature>
<feature type="modified residue" description="Phosphoserine" evidence="2">
    <location>
        <position position="45"/>
    </location>
</feature>
<feature type="modified residue" description="Phosphoserine" evidence="13">
    <location>
        <position position="59"/>
    </location>
</feature>
<feature type="modified residue" description="N6-acetyllysine" evidence="3">
    <location>
        <position position="92"/>
    </location>
</feature>
<feature type="modified residue" description="N6-acetyllysine" evidence="3">
    <location>
        <position position="166"/>
    </location>
</feature>
<accession>P23927</accession>
<accession>Q64325</accession>
<sequence>MDIAIHHPWIRRPFFPFHSPSRLFDQFFGEHLLESDLFSTATSLSPFYLRPPSFLRAPSWIDTGLSEMRLEKDRFSVNLDVKHFSPEELKVKVLGDVIEVHGKHEERQDEHGFISREFHRKYRIPADVDPLTITSSLSSDGVLTVNGPRKQVSGPERTIPITREEKPAVAAAPKK</sequence>
<keyword id="KW-0007">Acetylation</keyword>
<keyword id="KW-0143">Chaperone</keyword>
<keyword id="KW-0963">Cytoplasm</keyword>
<keyword id="KW-0903">Direct protein sequencing</keyword>
<keyword id="KW-0273">Eye lens protein</keyword>
<keyword id="KW-0458">Lysosome</keyword>
<keyword id="KW-0479">Metal-binding</keyword>
<keyword id="KW-0488">Methylation</keyword>
<keyword id="KW-0539">Nucleus</keyword>
<keyword id="KW-0597">Phosphoprotein</keyword>
<keyword id="KW-1185">Reference proteome</keyword>
<keyword id="KW-0964">Secreted</keyword>
<keyword id="KW-0862">Zinc</keyword>
<gene>
    <name evidence="12" type="primary">Cryab</name>
    <name type="synonym">Crya2</name>
</gene>
<protein>
    <recommendedName>
        <fullName>Alpha-crystallin B chain</fullName>
    </recommendedName>
    <alternativeName>
        <fullName>Alpha(B)-crystallin</fullName>
    </alternativeName>
    <alternativeName>
        <fullName>P23</fullName>
    </alternativeName>
</protein>
<dbReference type="EMBL" id="M63170">
    <property type="protein sequence ID" value="AAA37472.1"/>
    <property type="molecule type" value="mRNA"/>
</dbReference>
<dbReference type="EMBL" id="M73741">
    <property type="protein sequence ID" value="AAA67045.1"/>
    <property type="molecule type" value="Genomic_DNA"/>
</dbReference>
<dbReference type="EMBL" id="BC010768">
    <property type="protein sequence ID" value="AAH10768.1"/>
    <property type="molecule type" value="mRNA"/>
</dbReference>
<dbReference type="EMBL" id="M25770">
    <property type="protein sequence ID" value="AAA37133.1"/>
    <property type="molecule type" value="Genomic_DNA"/>
</dbReference>
<dbReference type="CCDS" id="CCDS23172.1"/>
<dbReference type="PIR" id="A39608">
    <property type="entry name" value="A39608"/>
</dbReference>
<dbReference type="RefSeq" id="NP_001276711.1">
    <property type="nucleotide sequence ID" value="NM_001289782.1"/>
</dbReference>
<dbReference type="RefSeq" id="NP_001276713.1">
    <property type="nucleotide sequence ID" value="NM_001289784.1"/>
</dbReference>
<dbReference type="RefSeq" id="NP_001276714.1">
    <property type="nucleotide sequence ID" value="NM_001289785.1"/>
</dbReference>
<dbReference type="RefSeq" id="NP_034094.1">
    <property type="nucleotide sequence ID" value="NM_009964.3"/>
</dbReference>
<dbReference type="RefSeq" id="XP_006510033.1">
    <property type="nucleotide sequence ID" value="XM_006509970.3"/>
</dbReference>
<dbReference type="RefSeq" id="XP_030099896.1">
    <property type="nucleotide sequence ID" value="XM_030244036.1"/>
</dbReference>
<dbReference type="RefSeq" id="XP_036010485.1">
    <property type="nucleotide sequence ID" value="XM_036154592.1"/>
</dbReference>
<dbReference type="BMRB" id="P23927"/>
<dbReference type="SMR" id="P23927"/>
<dbReference type="BioGRID" id="198909">
    <property type="interactions" value="28"/>
</dbReference>
<dbReference type="DIP" id="DIP-31060N"/>
<dbReference type="FunCoup" id="P23927">
    <property type="interactions" value="515"/>
</dbReference>
<dbReference type="IntAct" id="P23927">
    <property type="interactions" value="16"/>
</dbReference>
<dbReference type="MINT" id="P23927"/>
<dbReference type="STRING" id="10090.ENSMUSP00000149803"/>
<dbReference type="GlyGen" id="P23927">
    <property type="glycosylation" value="4 sites, 1 O-linked glycan (1 site)"/>
</dbReference>
<dbReference type="iPTMnet" id="P23927"/>
<dbReference type="PhosphoSitePlus" id="P23927"/>
<dbReference type="jPOST" id="P23927"/>
<dbReference type="PaxDb" id="10090-ENSMUSP00000034562"/>
<dbReference type="PeptideAtlas" id="P23927"/>
<dbReference type="ProteomicsDB" id="278038"/>
<dbReference type="Pumba" id="P23927"/>
<dbReference type="TopDownProteomics" id="P23927"/>
<dbReference type="Antibodypedia" id="3674">
    <property type="antibodies" value="1723 antibodies from 48 providers"/>
</dbReference>
<dbReference type="DNASU" id="12955"/>
<dbReference type="Ensembl" id="ENSMUST00000034562.9">
    <property type="protein sequence ID" value="ENSMUSP00000034562.8"/>
    <property type="gene ID" value="ENSMUSG00000032060.11"/>
</dbReference>
<dbReference type="Ensembl" id="ENSMUST00000214962.2">
    <property type="protein sequence ID" value="ENSMUSP00000149759.2"/>
    <property type="gene ID" value="ENSMUSG00000032060.11"/>
</dbReference>
<dbReference type="Ensembl" id="ENSMUST00000216755.2">
    <property type="protein sequence ID" value="ENSMUSP00000150669.2"/>
    <property type="gene ID" value="ENSMUSG00000032060.11"/>
</dbReference>
<dbReference type="Ensembl" id="ENSMUST00000217475.2">
    <property type="protein sequence ID" value="ENSMUSP00000149803.2"/>
    <property type="gene ID" value="ENSMUSG00000032060.11"/>
</dbReference>
<dbReference type="GeneID" id="12955"/>
<dbReference type="KEGG" id="mmu:12955"/>
<dbReference type="UCSC" id="uc009pkl.2">
    <property type="organism name" value="mouse"/>
</dbReference>
<dbReference type="AGR" id="MGI:88516"/>
<dbReference type="CTD" id="1410"/>
<dbReference type="MGI" id="MGI:88516">
    <property type="gene designation" value="Cryab"/>
</dbReference>
<dbReference type="VEuPathDB" id="HostDB:ENSMUSG00000032060"/>
<dbReference type="eggNOG" id="KOG3591">
    <property type="taxonomic scope" value="Eukaryota"/>
</dbReference>
<dbReference type="GeneTree" id="ENSGT00940000157434"/>
<dbReference type="HOGENOM" id="CLU_095001_2_0_1"/>
<dbReference type="InParanoid" id="P23927"/>
<dbReference type="OMA" id="FRDWWED"/>
<dbReference type="OrthoDB" id="1431247at2759"/>
<dbReference type="PhylomeDB" id="P23927"/>
<dbReference type="TreeFam" id="TF105049"/>
<dbReference type="Reactome" id="R-MMU-3371571">
    <property type="pathway name" value="HSF1-dependent transactivation"/>
</dbReference>
<dbReference type="BioGRID-ORCS" id="12955">
    <property type="hits" value="3 hits in 76 CRISPR screens"/>
</dbReference>
<dbReference type="ChiTaRS" id="Cryab">
    <property type="organism name" value="mouse"/>
</dbReference>
<dbReference type="PRO" id="PR:P23927"/>
<dbReference type="Proteomes" id="UP000000589">
    <property type="component" value="Chromosome 9"/>
</dbReference>
<dbReference type="RNAct" id="P23927">
    <property type="molecule type" value="protein"/>
</dbReference>
<dbReference type="Bgee" id="ENSMUSG00000032060">
    <property type="expression patterns" value="Expressed in epithelium of lens and 249 other cell types or tissues"/>
</dbReference>
<dbReference type="ExpressionAtlas" id="P23927">
    <property type="expression patterns" value="baseline and differential"/>
</dbReference>
<dbReference type="GO" id="GO:0032432">
    <property type="term" value="C:actin filament bundle"/>
    <property type="evidence" value="ECO:0007669"/>
    <property type="project" value="Ensembl"/>
</dbReference>
<dbReference type="GO" id="GO:0030424">
    <property type="term" value="C:axon"/>
    <property type="evidence" value="ECO:0007669"/>
    <property type="project" value="Ensembl"/>
</dbReference>
<dbReference type="GO" id="GO:0097512">
    <property type="term" value="C:cardiac myofibril"/>
    <property type="evidence" value="ECO:0007669"/>
    <property type="project" value="Ensembl"/>
</dbReference>
<dbReference type="GO" id="GO:0009986">
    <property type="term" value="C:cell surface"/>
    <property type="evidence" value="ECO:0007669"/>
    <property type="project" value="Ensembl"/>
</dbReference>
<dbReference type="GO" id="GO:0043292">
    <property type="term" value="C:contractile muscle fiber"/>
    <property type="evidence" value="ECO:0000314"/>
    <property type="project" value="MGI"/>
</dbReference>
<dbReference type="GO" id="GO:0005829">
    <property type="term" value="C:cytosol"/>
    <property type="evidence" value="ECO:0000314"/>
    <property type="project" value="MGI"/>
</dbReference>
<dbReference type="GO" id="GO:0043197">
    <property type="term" value="C:dendritic spine"/>
    <property type="evidence" value="ECO:0007669"/>
    <property type="project" value="Ensembl"/>
</dbReference>
<dbReference type="GO" id="GO:0005576">
    <property type="term" value="C:extracellular region"/>
    <property type="evidence" value="ECO:0007669"/>
    <property type="project" value="UniProtKB-SubCell"/>
</dbReference>
<dbReference type="GO" id="GO:0005764">
    <property type="term" value="C:lysosome"/>
    <property type="evidence" value="ECO:0007669"/>
    <property type="project" value="UniProtKB-SubCell"/>
</dbReference>
<dbReference type="GO" id="GO:0031430">
    <property type="term" value="C:M band"/>
    <property type="evidence" value="ECO:0007669"/>
    <property type="project" value="Ensembl"/>
</dbReference>
<dbReference type="GO" id="GO:0005739">
    <property type="term" value="C:mitochondrion"/>
    <property type="evidence" value="ECO:0000314"/>
    <property type="project" value="MGI"/>
</dbReference>
<dbReference type="GO" id="GO:0043209">
    <property type="term" value="C:myelin sheath"/>
    <property type="evidence" value="ECO:0007005"/>
    <property type="project" value="UniProtKB"/>
</dbReference>
<dbReference type="GO" id="GO:0005634">
    <property type="term" value="C:nucleus"/>
    <property type="evidence" value="ECO:0000250"/>
    <property type="project" value="UniProtKB"/>
</dbReference>
<dbReference type="GO" id="GO:0043204">
    <property type="term" value="C:perikaryon"/>
    <property type="evidence" value="ECO:0007669"/>
    <property type="project" value="Ensembl"/>
</dbReference>
<dbReference type="GO" id="GO:0005886">
    <property type="term" value="C:plasma membrane"/>
    <property type="evidence" value="ECO:0000314"/>
    <property type="project" value="MGI"/>
</dbReference>
<dbReference type="GO" id="GO:0032991">
    <property type="term" value="C:protein-containing complex"/>
    <property type="evidence" value="ECO:0000250"/>
    <property type="project" value="UniProtKB"/>
</dbReference>
<dbReference type="GO" id="GO:0097060">
    <property type="term" value="C:synaptic membrane"/>
    <property type="evidence" value="ECO:0007669"/>
    <property type="project" value="Ensembl"/>
</dbReference>
<dbReference type="GO" id="GO:0030018">
    <property type="term" value="C:Z disc"/>
    <property type="evidence" value="ECO:0000314"/>
    <property type="project" value="MGI"/>
</dbReference>
<dbReference type="GO" id="GO:0001540">
    <property type="term" value="F:amyloid-beta binding"/>
    <property type="evidence" value="ECO:0007669"/>
    <property type="project" value="Ensembl"/>
</dbReference>
<dbReference type="GO" id="GO:0046872">
    <property type="term" value="F:metal ion binding"/>
    <property type="evidence" value="ECO:0007669"/>
    <property type="project" value="UniProtKB-KW"/>
</dbReference>
<dbReference type="GO" id="GO:0008017">
    <property type="term" value="F:microtubule binding"/>
    <property type="evidence" value="ECO:0007669"/>
    <property type="project" value="Ensembl"/>
</dbReference>
<dbReference type="GO" id="GO:0042803">
    <property type="term" value="F:protein homodimerization activity"/>
    <property type="evidence" value="ECO:0000250"/>
    <property type="project" value="UniProtKB"/>
</dbReference>
<dbReference type="GO" id="GO:0044877">
    <property type="term" value="F:protein-containing complex binding"/>
    <property type="evidence" value="ECO:0007669"/>
    <property type="project" value="Ensembl"/>
</dbReference>
<dbReference type="GO" id="GO:0005212">
    <property type="term" value="F:structural constituent of eye lens"/>
    <property type="evidence" value="ECO:0000304"/>
    <property type="project" value="MGI"/>
</dbReference>
<dbReference type="GO" id="GO:0051082">
    <property type="term" value="F:unfolded protein binding"/>
    <property type="evidence" value="ECO:0007669"/>
    <property type="project" value="Ensembl"/>
</dbReference>
<dbReference type="GO" id="GO:0060561">
    <property type="term" value="P:apoptotic process involved in morphogenesis"/>
    <property type="evidence" value="ECO:0000316"/>
    <property type="project" value="MGI"/>
</dbReference>
<dbReference type="GO" id="GO:0043010">
    <property type="term" value="P:camera-type eye development"/>
    <property type="evidence" value="ECO:0000316"/>
    <property type="project" value="MGI"/>
</dbReference>
<dbReference type="GO" id="GO:0071480">
    <property type="term" value="P:cellular response to gamma radiation"/>
    <property type="evidence" value="ECO:0000266"/>
    <property type="project" value="MGI"/>
</dbReference>
<dbReference type="GO" id="GO:0002088">
    <property type="term" value="P:lens development in camera-type eye"/>
    <property type="evidence" value="ECO:0000316"/>
    <property type="project" value="MGI"/>
</dbReference>
<dbReference type="GO" id="GO:0031109">
    <property type="term" value="P:microtubule polymerization or depolymerization"/>
    <property type="evidence" value="ECO:0007669"/>
    <property type="project" value="Ensembl"/>
</dbReference>
<dbReference type="GO" id="GO:0007517">
    <property type="term" value="P:muscle organ development"/>
    <property type="evidence" value="ECO:0000316"/>
    <property type="project" value="MGI"/>
</dbReference>
<dbReference type="GO" id="GO:1905907">
    <property type="term" value="P:negative regulation of amyloid fibril formation"/>
    <property type="evidence" value="ECO:0007669"/>
    <property type="project" value="Ensembl"/>
</dbReference>
<dbReference type="GO" id="GO:0043066">
    <property type="term" value="P:negative regulation of apoptotic process"/>
    <property type="evidence" value="ECO:0000315"/>
    <property type="project" value="MGI"/>
</dbReference>
<dbReference type="GO" id="GO:0030308">
    <property type="term" value="P:negative regulation of cell growth"/>
    <property type="evidence" value="ECO:0007669"/>
    <property type="project" value="Ensembl"/>
</dbReference>
<dbReference type="GO" id="GO:0045892">
    <property type="term" value="P:negative regulation of DNA-templated transcription"/>
    <property type="evidence" value="ECO:0000250"/>
    <property type="project" value="UniProtKB"/>
</dbReference>
<dbReference type="GO" id="GO:0010629">
    <property type="term" value="P:negative regulation of gene expression"/>
    <property type="evidence" value="ECO:0000315"/>
    <property type="project" value="MGI"/>
</dbReference>
<dbReference type="GO" id="GO:0032387">
    <property type="term" value="P:negative regulation of intracellular transport"/>
    <property type="evidence" value="ECO:0007669"/>
    <property type="project" value="Ensembl"/>
</dbReference>
<dbReference type="GO" id="GO:0031333">
    <property type="term" value="P:negative regulation of protein-containing complex assembly"/>
    <property type="evidence" value="ECO:0007669"/>
    <property type="project" value="Ensembl"/>
</dbReference>
<dbReference type="GO" id="GO:2000378">
    <property type="term" value="P:negative regulation of reactive oxygen species metabolic process"/>
    <property type="evidence" value="ECO:0007669"/>
    <property type="project" value="Ensembl"/>
</dbReference>
<dbReference type="GO" id="GO:0006457">
    <property type="term" value="P:protein folding"/>
    <property type="evidence" value="ECO:0007669"/>
    <property type="project" value="Ensembl"/>
</dbReference>
<dbReference type="GO" id="GO:0050821">
    <property type="term" value="P:protein stabilization"/>
    <property type="evidence" value="ECO:0007669"/>
    <property type="project" value="Ensembl"/>
</dbReference>
<dbReference type="GO" id="GO:0043067">
    <property type="term" value="P:regulation of programmed cell death"/>
    <property type="evidence" value="ECO:0000266"/>
    <property type="project" value="MGI"/>
</dbReference>
<dbReference type="GO" id="GO:0032355">
    <property type="term" value="P:response to estradiol"/>
    <property type="evidence" value="ECO:0007669"/>
    <property type="project" value="Ensembl"/>
</dbReference>
<dbReference type="GO" id="GO:0042542">
    <property type="term" value="P:response to hydrogen peroxide"/>
    <property type="evidence" value="ECO:0000315"/>
    <property type="project" value="MGI"/>
</dbReference>
<dbReference type="GO" id="GO:0001666">
    <property type="term" value="P:response to hypoxia"/>
    <property type="evidence" value="ECO:0000315"/>
    <property type="project" value="MGI"/>
</dbReference>
<dbReference type="GO" id="GO:0051403">
    <property type="term" value="P:stress-activated MAPK cascade"/>
    <property type="evidence" value="ECO:0007669"/>
    <property type="project" value="Ensembl"/>
</dbReference>
<dbReference type="GO" id="GO:0007021">
    <property type="term" value="P:tubulin complex assembly"/>
    <property type="evidence" value="ECO:0000315"/>
    <property type="project" value="MGI"/>
</dbReference>
<dbReference type="CDD" id="cd06498">
    <property type="entry name" value="ACD_alphaB-crystallin_HspB5"/>
    <property type="match status" value="1"/>
</dbReference>
<dbReference type="FunFam" id="2.60.40.790:FF:000011">
    <property type="entry name" value="Alpha-crystallin B chain"/>
    <property type="match status" value="1"/>
</dbReference>
<dbReference type="Gene3D" id="2.60.40.790">
    <property type="match status" value="1"/>
</dbReference>
<dbReference type="InterPro" id="IPR002068">
    <property type="entry name" value="A-crystallin/Hsp20_dom"/>
</dbReference>
<dbReference type="InterPro" id="IPR037882">
    <property type="entry name" value="ACD_alphaB-crystallin"/>
</dbReference>
<dbReference type="InterPro" id="IPR055269">
    <property type="entry name" value="Alpha-crystallin/HSP_16"/>
</dbReference>
<dbReference type="InterPro" id="IPR001436">
    <property type="entry name" value="Alpha-crystallin/sHSP_animal"/>
</dbReference>
<dbReference type="InterPro" id="IPR003090">
    <property type="entry name" value="Alpha-crystallin_N"/>
</dbReference>
<dbReference type="InterPro" id="IPR008978">
    <property type="entry name" value="HSP20-like_chaperone"/>
</dbReference>
<dbReference type="PANTHER" id="PTHR45640:SF5">
    <property type="entry name" value="ALPHA-CRYSTALLIN B CHAIN"/>
    <property type="match status" value="1"/>
</dbReference>
<dbReference type="PANTHER" id="PTHR45640">
    <property type="entry name" value="HEAT SHOCK PROTEIN HSP-12.2-RELATED"/>
    <property type="match status" value="1"/>
</dbReference>
<dbReference type="Pfam" id="PF00525">
    <property type="entry name" value="Crystallin"/>
    <property type="match status" value="1"/>
</dbReference>
<dbReference type="Pfam" id="PF00011">
    <property type="entry name" value="HSP20"/>
    <property type="match status" value="1"/>
</dbReference>
<dbReference type="PIRSF" id="PIRSF036514">
    <property type="entry name" value="Sm_HSP_B1"/>
    <property type="match status" value="1"/>
</dbReference>
<dbReference type="PRINTS" id="PR00299">
    <property type="entry name" value="ACRYSTALLIN"/>
</dbReference>
<dbReference type="SUPFAM" id="SSF49764">
    <property type="entry name" value="HSP20-like chaperones"/>
    <property type="match status" value="1"/>
</dbReference>
<dbReference type="PROSITE" id="PS01031">
    <property type="entry name" value="SHSP"/>
    <property type="match status" value="1"/>
</dbReference>